<keyword id="KW-0010">Activator</keyword>
<keyword id="KW-0932">Cytokinin signaling pathway</keyword>
<keyword id="KW-0238">DNA-binding</keyword>
<keyword id="KW-0539">Nucleus</keyword>
<keyword id="KW-0597">Phosphoprotein</keyword>
<keyword id="KW-1185">Reference proteome</keyword>
<keyword id="KW-0804">Transcription</keyword>
<keyword id="KW-0805">Transcription regulation</keyword>
<keyword id="KW-0902">Two-component regulatory system</keyword>
<name>ORR27_ORYSJ</name>
<sequence>MAENNGAVPPGCKLPAGGFFGRLHVLVVDDDAAYLEELKLMLLLAGYAVTGKTTAEEALKEVDQNPEDYFHIVMTDVHMSGMDGFDLLHRINGRVPVIMFSEGEDVVMVMRTVMNGACDYMVKPMTSEAIKFIWKHVLRWRLSALPANASSSLQPSDHLAAALAAVAPPPPPAVQLPAAPAQAGNRDGEAHEEAELSTQPPALVPSGVQEAAAAVWSSRGDGQEAPPPAVAAAAKAPSKKRGASEVSDRGSNNLEATTGRKKVRTRFTWTTVSHTSFVRAYEQLKDQEGPKKIKQLMELDGIFVTKTQVSSHLQKYRSWLENERKKEEATSSSPCNPLSYTNCLDRGYSTWKQSSVITEGQQSSSFSGRPIHSMATSNGCLTTTDTQAGNYVGVGAKEIENFISSHQRSLGTAIGQESTIEQASLHSEITSVSRDAHENGNSQARGSAMSNGTSGTRGVLVTNENLLHVVSASLPSNMGQPTQPSQSFCTNELAANYSIISDQNPGTSHPTSSSAINNQNSKTQEMSVSQTVELGCGNDVMLDWPELVGLEDQLDNDVLMNSFFDGDLLQQGVVTAIDGTQEMLAFDSTGDLGSVPPRGLNNEIASHENTNGKNGASSGP</sequence>
<proteinExistence type="evidence at transcript level"/>
<comment type="function">
    <text evidence="1">Transcriptional activator that binds specific DNA sequence. Functions as a response regulator involved in His-to-Asp phosphorelay signal transduction system. Phosphorylation of the Asp residue in the receiver domain activates the ability of the protein to promote the transcription of target genes. May directly activate some type-A response regulators in response to cytokinins.</text>
</comment>
<comment type="subcellular location">
    <subcellularLocation>
        <location evidence="3">Nucleus</location>
    </subcellularLocation>
</comment>
<comment type="PTM">
    <text evidence="8">Two-component system major event consists of a His-to-Asp phosphorelay between a sensor histidine kinase (HK) and a response regulator (RR). In plants, the His-to-Asp phosphorelay involves an additional intermediate named Histidine-containing phosphotransfer protein (HPt). This multistep phosphorelay consists of a His-Asp-His-Asp sequential transfer of a phosphate group between first a His and an Asp of the HK protein, followed by the transfer to a conserved His of the HPt protein and finally the transfer to an Asp in the receiver domain of the RR protein.</text>
</comment>
<comment type="disruption phenotype">
    <text evidence="5">Dwarf, narrow leaf, lesion mimic, low tillering, altered kernel color, viviparous and low fertility phenotypes.</text>
</comment>
<comment type="similarity">
    <text evidence="8">Belongs to the ARR family. Type-B subfamily.</text>
</comment>
<evidence type="ECO:0000250" key="1">
    <source>
        <dbReference type="UniProtKB" id="Q940D0"/>
    </source>
</evidence>
<evidence type="ECO:0000255" key="2">
    <source>
        <dbReference type="PROSITE-ProRule" id="PRU00169"/>
    </source>
</evidence>
<evidence type="ECO:0000255" key="3">
    <source>
        <dbReference type="PROSITE-ProRule" id="PRU00625"/>
    </source>
</evidence>
<evidence type="ECO:0000256" key="4">
    <source>
        <dbReference type="SAM" id="MobiDB-lite"/>
    </source>
</evidence>
<evidence type="ECO:0000269" key="5">
    <source>
    </source>
</evidence>
<evidence type="ECO:0000303" key="6">
    <source>
    </source>
</evidence>
<evidence type="ECO:0000303" key="7">
    <source>
    </source>
</evidence>
<evidence type="ECO:0000305" key="8"/>
<evidence type="ECO:0000312" key="9">
    <source>
        <dbReference type="EMBL" id="AAT07636.1"/>
    </source>
</evidence>
<evidence type="ECO:0000312" key="10">
    <source>
        <dbReference type="EMBL" id="AAT93905.1"/>
    </source>
</evidence>
<evidence type="ECO:0000312" key="11">
    <source>
        <dbReference type="EMBL" id="AP008211"/>
    </source>
</evidence>
<dbReference type="EMBL" id="AC132483">
    <property type="protein sequence ID" value="AAT93905.1"/>
    <property type="molecule type" value="Genomic_DNA"/>
</dbReference>
<dbReference type="EMBL" id="AC134932">
    <property type="protein sequence ID" value="AAT07636.1"/>
    <property type="molecule type" value="Genomic_DNA"/>
</dbReference>
<dbReference type="EMBL" id="AP008211">
    <property type="status" value="NOT_ANNOTATED_CDS"/>
    <property type="molecule type" value="Genomic_DNA"/>
</dbReference>
<dbReference type="EMBL" id="AP014961">
    <property type="protein sequence ID" value="BAS93882.1"/>
    <property type="molecule type" value="Genomic_DNA"/>
</dbReference>
<dbReference type="EMBL" id="AK242722">
    <property type="protein sequence ID" value="BAH01325.1"/>
    <property type="molecule type" value="mRNA"/>
</dbReference>
<dbReference type="RefSeq" id="XP_015639050.1">
    <property type="nucleotide sequence ID" value="XM_015783564.1"/>
</dbReference>
<dbReference type="SMR" id="Q75HW2"/>
<dbReference type="FunCoup" id="Q75HW2">
    <property type="interactions" value="19"/>
</dbReference>
<dbReference type="STRING" id="39947.Q75HW2"/>
<dbReference type="PaxDb" id="39947-Q75HW2"/>
<dbReference type="EnsemblPlants" id="Os05t0395600-01">
    <property type="protein sequence ID" value="Os05t0395600-01"/>
    <property type="gene ID" value="Os05g0395600"/>
</dbReference>
<dbReference type="Gramene" id="Os05t0395600-01">
    <property type="protein sequence ID" value="Os05t0395600-01"/>
    <property type="gene ID" value="Os05g0395600"/>
</dbReference>
<dbReference type="eggNOG" id="KOG1601">
    <property type="taxonomic scope" value="Eukaryota"/>
</dbReference>
<dbReference type="HOGENOM" id="CLU_030138_0_0_1"/>
<dbReference type="InParanoid" id="Q75HW2"/>
<dbReference type="OMA" id="DRGYSTW"/>
<dbReference type="OrthoDB" id="650828at2759"/>
<dbReference type="Proteomes" id="UP000000763">
    <property type="component" value="Chromosome 5"/>
</dbReference>
<dbReference type="Proteomes" id="UP000059680">
    <property type="component" value="Chromosome 5"/>
</dbReference>
<dbReference type="GO" id="GO:0005634">
    <property type="term" value="C:nucleus"/>
    <property type="evidence" value="ECO:0007669"/>
    <property type="project" value="UniProtKB-SubCell"/>
</dbReference>
<dbReference type="GO" id="GO:0003677">
    <property type="term" value="F:DNA binding"/>
    <property type="evidence" value="ECO:0007669"/>
    <property type="project" value="UniProtKB-KW"/>
</dbReference>
<dbReference type="GO" id="GO:0009736">
    <property type="term" value="P:cytokinin-activated signaling pathway"/>
    <property type="evidence" value="ECO:0007669"/>
    <property type="project" value="UniProtKB-KW"/>
</dbReference>
<dbReference type="GO" id="GO:0000160">
    <property type="term" value="P:phosphorelay signal transduction system"/>
    <property type="evidence" value="ECO:0007669"/>
    <property type="project" value="UniProtKB-KW"/>
</dbReference>
<dbReference type="CDD" id="cd17584">
    <property type="entry name" value="REC_typeB_ARR-like"/>
    <property type="match status" value="1"/>
</dbReference>
<dbReference type="Gene3D" id="3.40.50.2300">
    <property type="match status" value="1"/>
</dbReference>
<dbReference type="Gene3D" id="1.10.10.60">
    <property type="entry name" value="Homeodomain-like"/>
    <property type="match status" value="1"/>
</dbReference>
<dbReference type="InterPro" id="IPR045279">
    <property type="entry name" value="ARR-like"/>
</dbReference>
<dbReference type="InterPro" id="IPR011006">
    <property type="entry name" value="CheY-like_superfamily"/>
</dbReference>
<dbReference type="InterPro" id="IPR009057">
    <property type="entry name" value="Homeodomain-like_sf"/>
</dbReference>
<dbReference type="InterPro" id="IPR006447">
    <property type="entry name" value="Myb_dom_plants"/>
</dbReference>
<dbReference type="InterPro" id="IPR001789">
    <property type="entry name" value="Sig_transdc_resp-reg_receiver"/>
</dbReference>
<dbReference type="NCBIfam" id="TIGR01557">
    <property type="entry name" value="myb_SHAQKYF"/>
    <property type="match status" value="1"/>
</dbReference>
<dbReference type="PANTHER" id="PTHR43874">
    <property type="entry name" value="TWO-COMPONENT RESPONSE REGULATOR"/>
    <property type="match status" value="1"/>
</dbReference>
<dbReference type="PANTHER" id="PTHR43874:SF84">
    <property type="entry name" value="TWO-COMPONENT RESPONSE REGULATOR ORR27"/>
    <property type="match status" value="1"/>
</dbReference>
<dbReference type="Pfam" id="PF00072">
    <property type="entry name" value="Response_reg"/>
    <property type="match status" value="1"/>
</dbReference>
<dbReference type="SMART" id="SM00448">
    <property type="entry name" value="REC"/>
    <property type="match status" value="1"/>
</dbReference>
<dbReference type="SUPFAM" id="SSF52172">
    <property type="entry name" value="CheY-like"/>
    <property type="match status" value="1"/>
</dbReference>
<dbReference type="SUPFAM" id="SSF46689">
    <property type="entry name" value="Homeodomain-like"/>
    <property type="match status" value="1"/>
</dbReference>
<dbReference type="PROSITE" id="PS50110">
    <property type="entry name" value="RESPONSE_REGULATORY"/>
    <property type="match status" value="1"/>
</dbReference>
<organism>
    <name type="scientific">Oryza sativa subsp. japonica</name>
    <name type="common">Rice</name>
    <dbReference type="NCBI Taxonomy" id="39947"/>
    <lineage>
        <taxon>Eukaryota</taxon>
        <taxon>Viridiplantae</taxon>
        <taxon>Streptophyta</taxon>
        <taxon>Embryophyta</taxon>
        <taxon>Tracheophyta</taxon>
        <taxon>Spermatophyta</taxon>
        <taxon>Magnoliopsida</taxon>
        <taxon>Liliopsida</taxon>
        <taxon>Poales</taxon>
        <taxon>Poaceae</taxon>
        <taxon>BOP clade</taxon>
        <taxon>Oryzoideae</taxon>
        <taxon>Oryzeae</taxon>
        <taxon>Oryzinae</taxon>
        <taxon>Oryza</taxon>
        <taxon>Oryza sativa</taxon>
    </lineage>
</organism>
<reference key="1">
    <citation type="journal article" date="2005" name="Mol. Genet. Genomics">
        <title>A fine physical map of the rice chromosome 5.</title>
        <authorList>
            <person name="Cheng C.-H."/>
            <person name="Chung M.C."/>
            <person name="Liu S.-M."/>
            <person name="Chen S.-K."/>
            <person name="Kao F.Y."/>
            <person name="Lin S.-J."/>
            <person name="Hsiao S.-H."/>
            <person name="Tseng I.C."/>
            <person name="Hsing Y.-I.C."/>
            <person name="Wu H.-P."/>
            <person name="Chen C.-S."/>
            <person name="Shaw J.-F."/>
            <person name="Wu J."/>
            <person name="Matsumoto T."/>
            <person name="Sasaki T."/>
            <person name="Chen H.-C."/>
            <person name="Chow T.-Y."/>
        </authorList>
    </citation>
    <scope>NUCLEOTIDE SEQUENCE [LARGE SCALE GENOMIC DNA]</scope>
    <source>
        <strain>cv. Nipponbare</strain>
    </source>
</reference>
<reference key="2">
    <citation type="journal article" date="2005" name="Nature">
        <title>The map-based sequence of the rice genome.</title>
        <authorList>
            <consortium name="International rice genome sequencing project (IRGSP)"/>
        </authorList>
    </citation>
    <scope>NUCLEOTIDE SEQUENCE [LARGE SCALE GENOMIC DNA]</scope>
    <source>
        <strain>cv. Nipponbare</strain>
    </source>
</reference>
<reference key="3">
    <citation type="journal article" date="2008" name="Nucleic Acids Res.">
        <title>The rice annotation project database (RAP-DB): 2008 update.</title>
        <authorList>
            <consortium name="The rice annotation project (RAP)"/>
        </authorList>
    </citation>
    <scope>GENOME REANNOTATION</scope>
    <source>
        <strain>cv. Nipponbare</strain>
    </source>
</reference>
<reference key="4">
    <citation type="journal article" date="2013" name="Rice">
        <title>Improvement of the Oryza sativa Nipponbare reference genome using next generation sequence and optical map data.</title>
        <authorList>
            <person name="Kawahara Y."/>
            <person name="de la Bastide M."/>
            <person name="Hamilton J.P."/>
            <person name="Kanamori H."/>
            <person name="McCombie W.R."/>
            <person name="Ouyang S."/>
            <person name="Schwartz D.C."/>
            <person name="Tanaka T."/>
            <person name="Wu J."/>
            <person name="Zhou S."/>
            <person name="Childs K.L."/>
            <person name="Davidson R.M."/>
            <person name="Lin H."/>
            <person name="Quesada-Ocampo L."/>
            <person name="Vaillancourt B."/>
            <person name="Sakai H."/>
            <person name="Lee S.S."/>
            <person name="Kim J."/>
            <person name="Numa H."/>
            <person name="Itoh T."/>
            <person name="Buell C.R."/>
            <person name="Matsumoto T."/>
        </authorList>
    </citation>
    <scope>GENOME REANNOTATION</scope>
    <source>
        <strain>cv. Nipponbare</strain>
    </source>
</reference>
<reference key="5">
    <citation type="submission" date="2006-10" db="EMBL/GenBank/DDBJ databases">
        <title>Oryza sativa full length cDNA.</title>
        <authorList>
            <consortium name="The rice full-length cDNA consortium"/>
        </authorList>
    </citation>
    <scope>NUCLEOTIDE SEQUENCE [LARGE SCALE MRNA]</scope>
    <source>
        <strain>cv. Nipponbare</strain>
    </source>
</reference>
<reference key="6">
    <citation type="journal article" date="2006" name="Plant Physiol.">
        <title>Whole-genome analysis of Oryza sativa reveals similar architecture of two-component signaling machinery with Arabidopsis.</title>
        <authorList>
            <person name="Pareek A."/>
            <person name="Singh A."/>
            <person name="Kumar M."/>
            <person name="Kushwaha H.R."/>
            <person name="Lynn A.M."/>
            <person name="Singla-Pareek S.L."/>
        </authorList>
    </citation>
    <scope>DISRUPTION PHENOTYPE</scope>
</reference>
<reference key="7">
    <citation type="journal article" date="2007" name="Plant Physiol.">
        <title>Nomenclature for two-component signaling elements of rice.</title>
        <authorList>
            <person name="Schaller G.E."/>
            <person name="Doi K."/>
            <person name="Hwang I."/>
            <person name="Kieber J.J."/>
            <person name="Khurana J.P."/>
            <person name="Kurata N."/>
            <person name="Mizuno T."/>
            <person name="Pareek A."/>
            <person name="Shiu S.H."/>
            <person name="Wu P."/>
            <person name="Yip W.K."/>
        </authorList>
    </citation>
    <scope>GENE FAMILY</scope>
    <scope>NOMENCLATURE</scope>
</reference>
<gene>
    <name evidence="7" type="primary">RR27</name>
    <name evidence="11" type="ordered locus">Os05g0395600</name>
    <name evidence="8" type="ordered locus">LOC_Os05g32880</name>
    <name evidence="10" type="ORF">OSJNBa0014C03.14</name>
    <name evidence="9" type="ORF">OSJNBb0092G21.3</name>
</gene>
<protein>
    <recommendedName>
        <fullName evidence="8">Two-component response regulator ORR27</fullName>
    </recommendedName>
    <alternativeName>
        <fullName evidence="6">OsRRA16</fullName>
    </alternativeName>
</protein>
<feature type="chain" id="PRO_0000433850" description="Two-component response regulator ORR27">
    <location>
        <begin position="1"/>
        <end position="620"/>
    </location>
</feature>
<feature type="domain" description="Response regulatory" evidence="2">
    <location>
        <begin position="24"/>
        <end position="138"/>
    </location>
</feature>
<feature type="DNA-binding region" description="Myb-like GARP" evidence="3">
    <location>
        <begin position="261"/>
        <end position="321"/>
    </location>
</feature>
<feature type="region of interest" description="Disordered" evidence="4">
    <location>
        <begin position="171"/>
        <end position="197"/>
    </location>
</feature>
<feature type="region of interest" description="Disordered" evidence="4">
    <location>
        <begin position="215"/>
        <end position="257"/>
    </location>
</feature>
<feature type="region of interest" description="Disordered" evidence="4">
    <location>
        <begin position="431"/>
        <end position="457"/>
    </location>
</feature>
<feature type="region of interest" description="Disordered" evidence="4">
    <location>
        <begin position="501"/>
        <end position="523"/>
    </location>
</feature>
<feature type="region of interest" description="Disordered" evidence="4">
    <location>
        <begin position="596"/>
        <end position="620"/>
    </location>
</feature>
<feature type="compositionally biased region" description="Polar residues" evidence="4">
    <location>
        <begin position="431"/>
        <end position="456"/>
    </location>
</feature>
<feature type="compositionally biased region" description="Polar residues" evidence="4">
    <location>
        <begin position="603"/>
        <end position="620"/>
    </location>
</feature>
<feature type="modified residue" description="4-aspartylphosphate" evidence="2">
    <location>
        <position position="76"/>
    </location>
</feature>
<accession>Q75HW2</accession>
<accession>A0A0P0WM15</accession>